<accession>Q8Z3U1</accession>
<protein>
    <recommendedName>
        <fullName evidence="2">tRNA (guanine-N(7)-)-methyltransferase</fullName>
        <ecNumber evidence="2">2.1.1.33</ecNumber>
    </recommendedName>
    <alternativeName>
        <fullName evidence="2">tRNA (guanine(46)-N(7))-methyltransferase</fullName>
    </alternativeName>
    <alternativeName>
        <fullName evidence="2">tRNA(m7G46)-methyltransferase</fullName>
    </alternativeName>
</protein>
<feature type="chain" id="PRO_0000171384" description="tRNA (guanine-N(7)-)-methyltransferase">
    <location>
        <begin position="1"/>
        <end position="239"/>
    </location>
</feature>
<feature type="region of interest" description="Interaction with RNA" evidence="2">
    <location>
        <begin position="150"/>
        <end position="155"/>
    </location>
</feature>
<feature type="active site" evidence="1">
    <location>
        <position position="144"/>
    </location>
</feature>
<feature type="binding site" evidence="2">
    <location>
        <position position="69"/>
    </location>
    <ligand>
        <name>S-adenosyl-L-methionine</name>
        <dbReference type="ChEBI" id="CHEBI:59789"/>
    </ligand>
</feature>
<feature type="binding site" evidence="2">
    <location>
        <position position="94"/>
    </location>
    <ligand>
        <name>S-adenosyl-L-methionine</name>
        <dbReference type="ChEBI" id="CHEBI:59789"/>
    </ligand>
</feature>
<feature type="binding site" evidence="2">
    <location>
        <position position="121"/>
    </location>
    <ligand>
        <name>S-adenosyl-L-methionine</name>
        <dbReference type="ChEBI" id="CHEBI:59789"/>
    </ligand>
</feature>
<feature type="binding site" evidence="2">
    <location>
        <position position="144"/>
    </location>
    <ligand>
        <name>S-adenosyl-L-methionine</name>
        <dbReference type="ChEBI" id="CHEBI:59789"/>
    </ligand>
</feature>
<feature type="binding site" evidence="2">
    <location>
        <position position="148"/>
    </location>
    <ligand>
        <name>substrate</name>
    </ligand>
</feature>
<feature type="binding site" evidence="2">
    <location>
        <position position="180"/>
    </location>
    <ligand>
        <name>substrate</name>
    </ligand>
</feature>
<feature type="binding site" evidence="2">
    <location>
        <begin position="217"/>
        <end position="220"/>
    </location>
    <ligand>
        <name>substrate</name>
    </ligand>
</feature>
<organism>
    <name type="scientific">Salmonella typhi</name>
    <dbReference type="NCBI Taxonomy" id="90370"/>
    <lineage>
        <taxon>Bacteria</taxon>
        <taxon>Pseudomonadati</taxon>
        <taxon>Pseudomonadota</taxon>
        <taxon>Gammaproteobacteria</taxon>
        <taxon>Enterobacterales</taxon>
        <taxon>Enterobacteriaceae</taxon>
        <taxon>Salmonella</taxon>
    </lineage>
</organism>
<proteinExistence type="inferred from homology"/>
<evidence type="ECO:0000250" key="1"/>
<evidence type="ECO:0000255" key="2">
    <source>
        <dbReference type="HAMAP-Rule" id="MF_01057"/>
    </source>
</evidence>
<keyword id="KW-0489">Methyltransferase</keyword>
<keyword id="KW-0949">S-adenosyl-L-methionine</keyword>
<keyword id="KW-0808">Transferase</keyword>
<keyword id="KW-0819">tRNA processing</keyword>
<reference key="1">
    <citation type="journal article" date="2001" name="Nature">
        <title>Complete genome sequence of a multiple drug resistant Salmonella enterica serovar Typhi CT18.</title>
        <authorList>
            <person name="Parkhill J."/>
            <person name="Dougan G."/>
            <person name="James K.D."/>
            <person name="Thomson N.R."/>
            <person name="Pickard D."/>
            <person name="Wain J."/>
            <person name="Churcher C.M."/>
            <person name="Mungall K.L."/>
            <person name="Bentley S.D."/>
            <person name="Holden M.T.G."/>
            <person name="Sebaihia M."/>
            <person name="Baker S."/>
            <person name="Basham D."/>
            <person name="Brooks K."/>
            <person name="Chillingworth T."/>
            <person name="Connerton P."/>
            <person name="Cronin A."/>
            <person name="Davis P."/>
            <person name="Davies R.M."/>
            <person name="Dowd L."/>
            <person name="White N."/>
            <person name="Farrar J."/>
            <person name="Feltwell T."/>
            <person name="Hamlin N."/>
            <person name="Haque A."/>
            <person name="Hien T.T."/>
            <person name="Holroyd S."/>
            <person name="Jagels K."/>
            <person name="Krogh A."/>
            <person name="Larsen T.S."/>
            <person name="Leather S."/>
            <person name="Moule S."/>
            <person name="O'Gaora P."/>
            <person name="Parry C."/>
            <person name="Quail M.A."/>
            <person name="Rutherford K.M."/>
            <person name="Simmonds M."/>
            <person name="Skelton J."/>
            <person name="Stevens K."/>
            <person name="Whitehead S."/>
            <person name="Barrell B.G."/>
        </authorList>
    </citation>
    <scope>NUCLEOTIDE SEQUENCE [LARGE SCALE GENOMIC DNA]</scope>
    <source>
        <strain>CT18</strain>
    </source>
</reference>
<reference key="2">
    <citation type="journal article" date="2003" name="J. Bacteriol.">
        <title>Comparative genomics of Salmonella enterica serovar Typhi strains Ty2 and CT18.</title>
        <authorList>
            <person name="Deng W."/>
            <person name="Liou S.-R."/>
            <person name="Plunkett G. III"/>
            <person name="Mayhew G.F."/>
            <person name="Rose D.J."/>
            <person name="Burland V."/>
            <person name="Kodoyianni V."/>
            <person name="Schwartz D.C."/>
            <person name="Blattner F.R."/>
        </authorList>
    </citation>
    <scope>NUCLEOTIDE SEQUENCE [LARGE SCALE GENOMIC DNA]</scope>
    <source>
        <strain>ATCC 700931 / Ty2</strain>
    </source>
</reference>
<sequence length="239" mass="27131">MKNDVISPEFDENGRPLRRIRSFVRRQGRLTKGQEHALENYWPVMGVEFSEAPVDFATLFGREAPVTLEIGFGMGASLVAMAKARPEQNFLGIEVHSPGVGACLASAHEEGVENLHVMCHDAVEVLHKMIPDNSLSMVQLFFPDPWHKARHNKRRIVQVPFAELVLSKLKLGGVFHMATDWEAYAEHMLEVMSSIDGYKNLSESNDYVPRPESRPVTKFEQRGHRLGHGVWDLMFERVK</sequence>
<dbReference type="EC" id="2.1.1.33" evidence="2"/>
<dbReference type="EMBL" id="AL513382">
    <property type="protein sequence ID" value="CAD02934.1"/>
    <property type="molecule type" value="Genomic_DNA"/>
</dbReference>
<dbReference type="EMBL" id="AE014613">
    <property type="protein sequence ID" value="AAO70574.1"/>
    <property type="molecule type" value="Genomic_DNA"/>
</dbReference>
<dbReference type="RefSeq" id="NP_457502.1">
    <property type="nucleotide sequence ID" value="NC_003198.1"/>
</dbReference>
<dbReference type="RefSeq" id="WP_000786887.1">
    <property type="nucleotide sequence ID" value="NZ_WSUR01000003.1"/>
</dbReference>
<dbReference type="SMR" id="Q8Z3U1"/>
<dbReference type="STRING" id="220341.gene:17587136"/>
<dbReference type="KEGG" id="stt:t3022"/>
<dbReference type="KEGG" id="sty:STY3264"/>
<dbReference type="PATRIC" id="fig|220341.7.peg.3329"/>
<dbReference type="eggNOG" id="COG0220">
    <property type="taxonomic scope" value="Bacteria"/>
</dbReference>
<dbReference type="HOGENOM" id="CLU_050910_0_1_6"/>
<dbReference type="OMA" id="PDPWHKS"/>
<dbReference type="OrthoDB" id="9802090at2"/>
<dbReference type="UniPathway" id="UPA00989"/>
<dbReference type="Proteomes" id="UP000000541">
    <property type="component" value="Chromosome"/>
</dbReference>
<dbReference type="Proteomes" id="UP000002670">
    <property type="component" value="Chromosome"/>
</dbReference>
<dbReference type="GO" id="GO:0043527">
    <property type="term" value="C:tRNA methyltransferase complex"/>
    <property type="evidence" value="ECO:0007669"/>
    <property type="project" value="TreeGrafter"/>
</dbReference>
<dbReference type="GO" id="GO:0008176">
    <property type="term" value="F:tRNA (guanine(46)-N7)-methyltransferase activity"/>
    <property type="evidence" value="ECO:0007669"/>
    <property type="project" value="UniProtKB-UniRule"/>
</dbReference>
<dbReference type="FunFam" id="3.40.50.150:FF:000024">
    <property type="entry name" value="tRNA (guanine-N(7)-)-methyltransferase"/>
    <property type="match status" value="1"/>
</dbReference>
<dbReference type="Gene3D" id="3.40.50.150">
    <property type="entry name" value="Vaccinia Virus protein VP39"/>
    <property type="match status" value="1"/>
</dbReference>
<dbReference type="HAMAP" id="MF_01057">
    <property type="entry name" value="tRNA_methyltr_TrmB"/>
    <property type="match status" value="1"/>
</dbReference>
<dbReference type="InterPro" id="IPR029063">
    <property type="entry name" value="SAM-dependent_MTases_sf"/>
</dbReference>
<dbReference type="InterPro" id="IPR003358">
    <property type="entry name" value="tRNA_(Gua-N-7)_MeTrfase_Trmb"/>
</dbReference>
<dbReference type="InterPro" id="IPR055361">
    <property type="entry name" value="tRNA_methyltr_TrmB_bact"/>
</dbReference>
<dbReference type="NCBIfam" id="TIGR00091">
    <property type="entry name" value="tRNA (guanosine(46)-N7)-methyltransferase TrmB"/>
    <property type="match status" value="1"/>
</dbReference>
<dbReference type="PANTHER" id="PTHR23417">
    <property type="entry name" value="3-DEOXY-D-MANNO-OCTULOSONIC-ACID TRANSFERASE/TRNA GUANINE-N 7 - -METHYLTRANSFERASE"/>
    <property type="match status" value="1"/>
</dbReference>
<dbReference type="PANTHER" id="PTHR23417:SF14">
    <property type="entry name" value="PENTACOTRIPEPTIDE-REPEAT REGION OF PRORP DOMAIN-CONTAINING PROTEIN"/>
    <property type="match status" value="1"/>
</dbReference>
<dbReference type="Pfam" id="PF02390">
    <property type="entry name" value="Methyltransf_4"/>
    <property type="match status" value="1"/>
</dbReference>
<dbReference type="SUPFAM" id="SSF53335">
    <property type="entry name" value="S-adenosyl-L-methionine-dependent methyltransferases"/>
    <property type="match status" value="1"/>
</dbReference>
<dbReference type="PROSITE" id="PS51625">
    <property type="entry name" value="SAM_MT_TRMB"/>
    <property type="match status" value="1"/>
</dbReference>
<gene>
    <name evidence="2" type="primary">trmB</name>
    <name type="ordered locus">STY3264</name>
    <name type="ordered locus">t3022</name>
</gene>
<comment type="function">
    <text evidence="2">Catalyzes the formation of N(7)-methylguanine at position 46 (m7G46) in tRNA.</text>
</comment>
<comment type="catalytic activity">
    <reaction evidence="2">
        <text>guanosine(46) in tRNA + S-adenosyl-L-methionine = N(7)-methylguanosine(46) in tRNA + S-adenosyl-L-homocysteine</text>
        <dbReference type="Rhea" id="RHEA:42708"/>
        <dbReference type="Rhea" id="RHEA-COMP:10188"/>
        <dbReference type="Rhea" id="RHEA-COMP:10189"/>
        <dbReference type="ChEBI" id="CHEBI:57856"/>
        <dbReference type="ChEBI" id="CHEBI:59789"/>
        <dbReference type="ChEBI" id="CHEBI:74269"/>
        <dbReference type="ChEBI" id="CHEBI:74480"/>
        <dbReference type="EC" id="2.1.1.33"/>
    </reaction>
</comment>
<comment type="pathway">
    <text evidence="2">tRNA modification; N(7)-methylguanine-tRNA biosynthesis.</text>
</comment>
<comment type="subunit">
    <text evidence="2">Monomer.</text>
</comment>
<comment type="similarity">
    <text evidence="2">Belongs to the class I-like SAM-binding methyltransferase superfamily. TrmB family.</text>
</comment>
<name>TRMB_SALTI</name>